<proteinExistence type="inferred from homology"/>
<keyword id="KW-0067">ATP-binding</keyword>
<keyword id="KW-0963">Cytoplasm</keyword>
<keyword id="KW-1015">Disulfide bond</keyword>
<keyword id="KW-0547">Nucleotide-binding</keyword>
<keyword id="KW-0694">RNA-binding</keyword>
<keyword id="KW-0808">Transferase</keyword>
<keyword id="KW-0819">tRNA processing</keyword>
<keyword id="KW-0820">tRNA-binding</keyword>
<reference key="1">
    <citation type="journal article" date="2008" name="Infect. Immun.">
        <title>Genomic comparison of virulent Rickettsia rickettsii Sheila Smith and avirulent Rickettsia rickettsii Iowa.</title>
        <authorList>
            <person name="Ellison D.W."/>
            <person name="Clark T.R."/>
            <person name="Sturdevant D.E."/>
            <person name="Virtaneva K."/>
            <person name="Porcella S.F."/>
            <person name="Hackstadt T."/>
        </authorList>
    </citation>
    <scope>NUCLEOTIDE SEQUENCE [LARGE SCALE GENOMIC DNA]</scope>
    <source>
        <strain>Iowa</strain>
    </source>
</reference>
<comment type="function">
    <text evidence="1">Catalyzes the 2-thiolation of uridine at the wobble position (U34) of tRNA, leading to the formation of s(2)U34.</text>
</comment>
<comment type="catalytic activity">
    <reaction evidence="1">
        <text>S-sulfanyl-L-cysteinyl-[protein] + uridine(34) in tRNA + AH2 + ATP = 2-thiouridine(34) in tRNA + L-cysteinyl-[protein] + A + AMP + diphosphate + H(+)</text>
        <dbReference type="Rhea" id="RHEA:47032"/>
        <dbReference type="Rhea" id="RHEA-COMP:10131"/>
        <dbReference type="Rhea" id="RHEA-COMP:11726"/>
        <dbReference type="Rhea" id="RHEA-COMP:11727"/>
        <dbReference type="Rhea" id="RHEA-COMP:11728"/>
        <dbReference type="ChEBI" id="CHEBI:13193"/>
        <dbReference type="ChEBI" id="CHEBI:15378"/>
        <dbReference type="ChEBI" id="CHEBI:17499"/>
        <dbReference type="ChEBI" id="CHEBI:29950"/>
        <dbReference type="ChEBI" id="CHEBI:30616"/>
        <dbReference type="ChEBI" id="CHEBI:33019"/>
        <dbReference type="ChEBI" id="CHEBI:61963"/>
        <dbReference type="ChEBI" id="CHEBI:65315"/>
        <dbReference type="ChEBI" id="CHEBI:87170"/>
        <dbReference type="ChEBI" id="CHEBI:456215"/>
        <dbReference type="EC" id="2.8.1.13"/>
    </reaction>
</comment>
<comment type="subcellular location">
    <subcellularLocation>
        <location evidence="1">Cytoplasm</location>
    </subcellularLocation>
</comment>
<comment type="similarity">
    <text evidence="1">Belongs to the MnmA/TRMU family.</text>
</comment>
<comment type="sequence caution" evidence="2">
    <conflict type="erroneous initiation">
        <sequence resource="EMBL-CDS" id="ABY72373"/>
    </conflict>
</comment>
<sequence length="365" mass="40141">MINLGAKQSTIVVAMSGGVDSSAVAAMLNEQGHNVIGITLQLYDHGMAVGKKNACCAGQDIYDAKMVANKLGIPHYVLDYESKFKESVIDNFVDSYLQGETPLPCVQCNKSVKFRDLIKTARELGADKLATGHYVRKINGDNGAELHTGLDPAKDQSYFLFTTTKEQLEYLRFPLGGLTKGETRKLASKFGLEVADKPDSQDICFIPDGNYKSVINKIRPNSSESGKIIHVNGFELGEHSGIINYTIGQRRGLGIAYNEPLYVVKIDPKDNIVYVGPESALNVQEFIIRDVNWLADEIKDNEKLEVAVKIRSTRPPRLAEISKLGDDKMKVKFLCKEKAVAPGQACVIYAGARVLGGGWITREIR</sequence>
<dbReference type="EC" id="2.8.1.13" evidence="1"/>
<dbReference type="EMBL" id="CP000766">
    <property type="protein sequence ID" value="ABY72373.1"/>
    <property type="status" value="ALT_INIT"/>
    <property type="molecule type" value="Genomic_DNA"/>
</dbReference>
<dbReference type="RefSeq" id="WP_012150617.1">
    <property type="nucleotide sequence ID" value="NC_010263.3"/>
</dbReference>
<dbReference type="SMR" id="B0BWZ7"/>
<dbReference type="GeneID" id="79937182"/>
<dbReference type="KEGG" id="rrj:RrIowa_0491"/>
<dbReference type="eggNOG" id="COG0482">
    <property type="taxonomic scope" value="Bacteria"/>
</dbReference>
<dbReference type="HOGENOM" id="CLU_035188_0_1_5"/>
<dbReference type="Proteomes" id="UP000000796">
    <property type="component" value="Chromosome"/>
</dbReference>
<dbReference type="GO" id="GO:0005737">
    <property type="term" value="C:cytoplasm"/>
    <property type="evidence" value="ECO:0007669"/>
    <property type="project" value="UniProtKB-SubCell"/>
</dbReference>
<dbReference type="GO" id="GO:0005524">
    <property type="term" value="F:ATP binding"/>
    <property type="evidence" value="ECO:0007669"/>
    <property type="project" value="UniProtKB-KW"/>
</dbReference>
<dbReference type="GO" id="GO:0000049">
    <property type="term" value="F:tRNA binding"/>
    <property type="evidence" value="ECO:0007669"/>
    <property type="project" value="UniProtKB-KW"/>
</dbReference>
<dbReference type="GO" id="GO:0103016">
    <property type="term" value="F:tRNA-uridine 2-sulfurtransferase activity"/>
    <property type="evidence" value="ECO:0007669"/>
    <property type="project" value="UniProtKB-EC"/>
</dbReference>
<dbReference type="GO" id="GO:0002143">
    <property type="term" value="P:tRNA wobble position uridine thiolation"/>
    <property type="evidence" value="ECO:0007669"/>
    <property type="project" value="TreeGrafter"/>
</dbReference>
<dbReference type="CDD" id="cd01998">
    <property type="entry name" value="MnmA_TRMU-like"/>
    <property type="match status" value="1"/>
</dbReference>
<dbReference type="FunFam" id="2.30.30.280:FF:000001">
    <property type="entry name" value="tRNA-specific 2-thiouridylase MnmA"/>
    <property type="match status" value="1"/>
</dbReference>
<dbReference type="FunFam" id="2.40.30.10:FF:000127">
    <property type="entry name" value="tRNA-specific 2-thiouridylase MnmA"/>
    <property type="match status" value="1"/>
</dbReference>
<dbReference type="FunFam" id="3.40.50.620:FF:000115">
    <property type="entry name" value="tRNA-specific 2-thiouridylase MnmA"/>
    <property type="match status" value="1"/>
</dbReference>
<dbReference type="Gene3D" id="2.30.30.280">
    <property type="entry name" value="Adenine nucleotide alpha hydrolases-like domains"/>
    <property type="match status" value="1"/>
</dbReference>
<dbReference type="Gene3D" id="3.40.50.620">
    <property type="entry name" value="HUPs"/>
    <property type="match status" value="1"/>
</dbReference>
<dbReference type="Gene3D" id="2.40.30.10">
    <property type="entry name" value="Translation factors"/>
    <property type="match status" value="1"/>
</dbReference>
<dbReference type="HAMAP" id="MF_00144">
    <property type="entry name" value="tRNA_thiouridyl_MnmA"/>
    <property type="match status" value="1"/>
</dbReference>
<dbReference type="InterPro" id="IPR004506">
    <property type="entry name" value="MnmA-like"/>
</dbReference>
<dbReference type="InterPro" id="IPR046885">
    <property type="entry name" value="MnmA-like_C"/>
</dbReference>
<dbReference type="InterPro" id="IPR046884">
    <property type="entry name" value="MnmA-like_central"/>
</dbReference>
<dbReference type="InterPro" id="IPR023382">
    <property type="entry name" value="MnmA-like_central_sf"/>
</dbReference>
<dbReference type="InterPro" id="IPR014729">
    <property type="entry name" value="Rossmann-like_a/b/a_fold"/>
</dbReference>
<dbReference type="NCBIfam" id="NF001138">
    <property type="entry name" value="PRK00143.1"/>
    <property type="match status" value="1"/>
</dbReference>
<dbReference type="NCBIfam" id="TIGR00420">
    <property type="entry name" value="trmU"/>
    <property type="match status" value="1"/>
</dbReference>
<dbReference type="PANTHER" id="PTHR11933:SF5">
    <property type="entry name" value="MITOCHONDRIAL TRNA-SPECIFIC 2-THIOURIDYLASE 1"/>
    <property type="match status" value="1"/>
</dbReference>
<dbReference type="PANTHER" id="PTHR11933">
    <property type="entry name" value="TRNA 5-METHYLAMINOMETHYL-2-THIOURIDYLATE -METHYLTRANSFERASE"/>
    <property type="match status" value="1"/>
</dbReference>
<dbReference type="Pfam" id="PF03054">
    <property type="entry name" value="tRNA_Me_trans"/>
    <property type="match status" value="1"/>
</dbReference>
<dbReference type="Pfam" id="PF20258">
    <property type="entry name" value="tRNA_Me_trans_C"/>
    <property type="match status" value="1"/>
</dbReference>
<dbReference type="Pfam" id="PF20259">
    <property type="entry name" value="tRNA_Me_trans_M"/>
    <property type="match status" value="1"/>
</dbReference>
<dbReference type="SUPFAM" id="SSF52402">
    <property type="entry name" value="Adenine nucleotide alpha hydrolases-like"/>
    <property type="match status" value="1"/>
</dbReference>
<accession>B0BWZ7</accession>
<organism>
    <name type="scientific">Rickettsia rickettsii (strain Iowa)</name>
    <dbReference type="NCBI Taxonomy" id="452659"/>
    <lineage>
        <taxon>Bacteria</taxon>
        <taxon>Pseudomonadati</taxon>
        <taxon>Pseudomonadota</taxon>
        <taxon>Alphaproteobacteria</taxon>
        <taxon>Rickettsiales</taxon>
        <taxon>Rickettsiaceae</taxon>
        <taxon>Rickettsieae</taxon>
        <taxon>Rickettsia</taxon>
        <taxon>spotted fever group</taxon>
    </lineage>
</organism>
<name>MNMA_RICRO</name>
<evidence type="ECO:0000255" key="1">
    <source>
        <dbReference type="HAMAP-Rule" id="MF_00144"/>
    </source>
</evidence>
<evidence type="ECO:0000305" key="2"/>
<gene>
    <name evidence="1" type="primary">mnmA</name>
    <name type="ordered locus">RrIowa_0491</name>
</gene>
<feature type="chain" id="PRO_0000349778" description="tRNA-specific 2-thiouridylase MnmA">
    <location>
        <begin position="1"/>
        <end position="365"/>
    </location>
</feature>
<feature type="region of interest" description="Interaction with tRNA" evidence="1">
    <location>
        <begin position="154"/>
        <end position="156"/>
    </location>
</feature>
<feature type="active site" description="Nucleophile" evidence="1">
    <location>
        <position position="108"/>
    </location>
</feature>
<feature type="active site" description="Cysteine persulfide intermediate" evidence="1">
    <location>
        <position position="204"/>
    </location>
</feature>
<feature type="binding site" evidence="1">
    <location>
        <begin position="14"/>
        <end position="21"/>
    </location>
    <ligand>
        <name>ATP</name>
        <dbReference type="ChEBI" id="CHEBI:30616"/>
    </ligand>
</feature>
<feature type="binding site" evidence="1">
    <location>
        <position position="40"/>
    </location>
    <ligand>
        <name>ATP</name>
        <dbReference type="ChEBI" id="CHEBI:30616"/>
    </ligand>
</feature>
<feature type="binding site" evidence="1">
    <location>
        <position position="132"/>
    </location>
    <ligand>
        <name>ATP</name>
        <dbReference type="ChEBI" id="CHEBI:30616"/>
    </ligand>
</feature>
<feature type="site" description="Interaction with tRNA" evidence="1">
    <location>
        <position position="133"/>
    </location>
</feature>
<feature type="site" description="Interaction with tRNA" evidence="1">
    <location>
        <position position="344"/>
    </location>
</feature>
<feature type="disulfide bond" description="Alternate" evidence="1">
    <location>
        <begin position="108"/>
        <end position="204"/>
    </location>
</feature>
<protein>
    <recommendedName>
        <fullName evidence="1">tRNA-specific 2-thiouridylase MnmA</fullName>
        <ecNumber evidence="1">2.8.1.13</ecNumber>
    </recommendedName>
</protein>